<reference key="1">
    <citation type="journal article" date="2004" name="Genome Biol.">
        <title>A genome annotation-driven approach to cloning the human ORFeome.</title>
        <authorList>
            <person name="Collins J.E."/>
            <person name="Wright C.L."/>
            <person name="Edwards C.A."/>
            <person name="Davis M.P."/>
            <person name="Grinham J.A."/>
            <person name="Cole C.G."/>
            <person name="Goward M.E."/>
            <person name="Aguado B."/>
            <person name="Mallya M."/>
            <person name="Mokrab Y."/>
            <person name="Huckle E.J."/>
            <person name="Beare D.M."/>
            <person name="Dunham I."/>
        </authorList>
    </citation>
    <scope>NUCLEOTIDE SEQUENCE [LARGE SCALE MRNA] (ISOFORM 1)</scope>
</reference>
<reference key="2">
    <citation type="journal article" date="2007" name="BMC Genomics">
        <title>The full-ORF clone resource of the German cDNA consortium.</title>
        <authorList>
            <person name="Bechtel S."/>
            <person name="Rosenfelder H."/>
            <person name="Duda A."/>
            <person name="Schmidt C.P."/>
            <person name="Ernst U."/>
            <person name="Wellenreuther R."/>
            <person name="Mehrle A."/>
            <person name="Schuster C."/>
            <person name="Bahr A."/>
            <person name="Bloecker H."/>
            <person name="Heubner D."/>
            <person name="Hoerlein A."/>
            <person name="Michel G."/>
            <person name="Wedler H."/>
            <person name="Koehrer K."/>
            <person name="Ottenwaelder B."/>
            <person name="Poustka A."/>
            <person name="Wiemann S."/>
            <person name="Schupp I."/>
        </authorList>
    </citation>
    <scope>NUCLEOTIDE SEQUENCE [LARGE SCALE MRNA] (ISOFORM 1)</scope>
    <source>
        <tissue>Kidney</tissue>
    </source>
</reference>
<reference key="3">
    <citation type="journal article" date="1999" name="Nature">
        <title>The DNA sequence of human chromosome 22.</title>
        <authorList>
            <person name="Dunham I."/>
            <person name="Hunt A.R."/>
            <person name="Collins J.E."/>
            <person name="Bruskiewich R."/>
            <person name="Beare D.M."/>
            <person name="Clamp M."/>
            <person name="Smink L.J."/>
            <person name="Ainscough R."/>
            <person name="Almeida J.P."/>
            <person name="Babbage A.K."/>
            <person name="Bagguley C."/>
            <person name="Bailey J."/>
            <person name="Barlow K.F."/>
            <person name="Bates K.N."/>
            <person name="Beasley O.P."/>
            <person name="Bird C.P."/>
            <person name="Blakey S.E."/>
            <person name="Bridgeman A.M."/>
            <person name="Buck D."/>
            <person name="Burgess J."/>
            <person name="Burrill W.D."/>
            <person name="Burton J."/>
            <person name="Carder C."/>
            <person name="Carter N.P."/>
            <person name="Chen Y."/>
            <person name="Clark G."/>
            <person name="Clegg S.M."/>
            <person name="Cobley V.E."/>
            <person name="Cole C.G."/>
            <person name="Collier R.E."/>
            <person name="Connor R."/>
            <person name="Conroy D."/>
            <person name="Corby N.R."/>
            <person name="Coville G.J."/>
            <person name="Cox A.V."/>
            <person name="Davis J."/>
            <person name="Dawson E."/>
            <person name="Dhami P.D."/>
            <person name="Dockree C."/>
            <person name="Dodsworth S.J."/>
            <person name="Durbin R.M."/>
            <person name="Ellington A.G."/>
            <person name="Evans K.L."/>
            <person name="Fey J.M."/>
            <person name="Fleming K."/>
            <person name="French L."/>
            <person name="Garner A.A."/>
            <person name="Gilbert J.G.R."/>
            <person name="Goward M.E."/>
            <person name="Grafham D.V."/>
            <person name="Griffiths M.N.D."/>
            <person name="Hall C."/>
            <person name="Hall R.E."/>
            <person name="Hall-Tamlyn G."/>
            <person name="Heathcott R.W."/>
            <person name="Ho S."/>
            <person name="Holmes S."/>
            <person name="Hunt S.E."/>
            <person name="Jones M.C."/>
            <person name="Kershaw J."/>
            <person name="Kimberley A.M."/>
            <person name="King A."/>
            <person name="Laird G.K."/>
            <person name="Langford C.F."/>
            <person name="Leversha M.A."/>
            <person name="Lloyd C."/>
            <person name="Lloyd D.M."/>
            <person name="Martyn I.D."/>
            <person name="Mashreghi-Mohammadi M."/>
            <person name="Matthews L.H."/>
            <person name="Mccann O.T."/>
            <person name="Mcclay J."/>
            <person name="Mclaren S."/>
            <person name="McMurray A.A."/>
            <person name="Milne S.A."/>
            <person name="Mortimore B.J."/>
            <person name="Odell C.N."/>
            <person name="Pavitt R."/>
            <person name="Pearce A.V."/>
            <person name="Pearson D."/>
            <person name="Phillimore B.J.C.T."/>
            <person name="Phillips S.H."/>
            <person name="Plumb R.W."/>
            <person name="Ramsay H."/>
            <person name="Ramsey Y."/>
            <person name="Rogers L."/>
            <person name="Ross M.T."/>
            <person name="Scott C.E."/>
            <person name="Sehra H.K."/>
            <person name="Skuce C.D."/>
            <person name="Smalley S."/>
            <person name="Smith M.L."/>
            <person name="Soderlund C."/>
            <person name="Spragon L."/>
            <person name="Steward C.A."/>
            <person name="Sulston J.E."/>
            <person name="Swann R.M."/>
            <person name="Vaudin M."/>
            <person name="Wall M."/>
            <person name="Wallis J.M."/>
            <person name="Whiteley M.N."/>
            <person name="Willey D.L."/>
            <person name="Williams L."/>
            <person name="Williams S.A."/>
            <person name="Williamson H."/>
            <person name="Wilmer T.E."/>
            <person name="Wilming L."/>
            <person name="Wright C.L."/>
            <person name="Hubbard T."/>
            <person name="Bentley D.R."/>
            <person name="Beck S."/>
            <person name="Rogers J."/>
            <person name="Shimizu N."/>
            <person name="Minoshima S."/>
            <person name="Kawasaki K."/>
            <person name="Sasaki T."/>
            <person name="Asakawa S."/>
            <person name="Kudoh J."/>
            <person name="Shintani A."/>
            <person name="Shibuya K."/>
            <person name="Yoshizaki Y."/>
            <person name="Aoki N."/>
            <person name="Mitsuyama S."/>
            <person name="Roe B.A."/>
            <person name="Chen F."/>
            <person name="Chu L."/>
            <person name="Crabtree J."/>
            <person name="Deschamps S."/>
            <person name="Do A."/>
            <person name="Do T."/>
            <person name="Dorman A."/>
            <person name="Fang F."/>
            <person name="Fu Y."/>
            <person name="Hu P."/>
            <person name="Hua A."/>
            <person name="Kenton S."/>
            <person name="Lai H."/>
            <person name="Lao H.I."/>
            <person name="Lewis J."/>
            <person name="Lewis S."/>
            <person name="Lin S.-P."/>
            <person name="Loh P."/>
            <person name="Malaj E."/>
            <person name="Nguyen T."/>
            <person name="Pan H."/>
            <person name="Phan S."/>
            <person name="Qi S."/>
            <person name="Qian Y."/>
            <person name="Ray L."/>
            <person name="Ren Q."/>
            <person name="Shaull S."/>
            <person name="Sloan D."/>
            <person name="Song L."/>
            <person name="Wang Q."/>
            <person name="Wang Y."/>
            <person name="Wang Z."/>
            <person name="White J."/>
            <person name="Willingham D."/>
            <person name="Wu H."/>
            <person name="Yao Z."/>
            <person name="Zhan M."/>
            <person name="Zhang G."/>
            <person name="Chissoe S."/>
            <person name="Murray J."/>
            <person name="Miller N."/>
            <person name="Minx P."/>
            <person name="Fulton R."/>
            <person name="Johnson D."/>
            <person name="Bemis G."/>
            <person name="Bentley D."/>
            <person name="Bradshaw H."/>
            <person name="Bourne S."/>
            <person name="Cordes M."/>
            <person name="Du Z."/>
            <person name="Fulton L."/>
            <person name="Goela D."/>
            <person name="Graves T."/>
            <person name="Hawkins J."/>
            <person name="Hinds K."/>
            <person name="Kemp K."/>
            <person name="Latreille P."/>
            <person name="Layman D."/>
            <person name="Ozersky P."/>
            <person name="Rohlfing T."/>
            <person name="Scheet P."/>
            <person name="Walker C."/>
            <person name="Wamsley A."/>
            <person name="Wohldmann P."/>
            <person name="Pepin K."/>
            <person name="Nelson J."/>
            <person name="Korf I."/>
            <person name="Bedell J.A."/>
            <person name="Hillier L.W."/>
            <person name="Mardis E."/>
            <person name="Waterston R."/>
            <person name="Wilson R."/>
            <person name="Emanuel B.S."/>
            <person name="Shaikh T."/>
            <person name="Kurahashi H."/>
            <person name="Saitta S."/>
            <person name="Budarf M.L."/>
            <person name="McDermid H.E."/>
            <person name="Johnson A."/>
            <person name="Wong A.C.C."/>
            <person name="Morrow B.E."/>
            <person name="Edelmann L."/>
            <person name="Kim U.J."/>
            <person name="Shizuya H."/>
            <person name="Simon M.I."/>
            <person name="Dumanski J.P."/>
            <person name="Peyrard M."/>
            <person name="Kedra D."/>
            <person name="Seroussi E."/>
            <person name="Fransson I."/>
            <person name="Tapia I."/>
            <person name="Bruder C.E."/>
            <person name="O'Brien K.P."/>
            <person name="Wilkinson P."/>
            <person name="Bodenteich A."/>
            <person name="Hartman K."/>
            <person name="Hu X."/>
            <person name="Khan A.S."/>
            <person name="Lane L."/>
            <person name="Tilahun Y."/>
            <person name="Wright H."/>
        </authorList>
    </citation>
    <scope>NUCLEOTIDE SEQUENCE [LARGE SCALE GENOMIC DNA]</scope>
</reference>
<reference key="4">
    <citation type="submission" date="2005-09" db="EMBL/GenBank/DDBJ databases">
        <authorList>
            <person name="Mural R.J."/>
            <person name="Istrail S."/>
            <person name="Sutton G.G."/>
            <person name="Florea L."/>
            <person name="Halpern A.L."/>
            <person name="Mobarry C.M."/>
            <person name="Lippert R."/>
            <person name="Walenz B."/>
            <person name="Shatkay H."/>
            <person name="Dew I."/>
            <person name="Miller J.R."/>
            <person name="Flanigan M.J."/>
            <person name="Edwards N.J."/>
            <person name="Bolanos R."/>
            <person name="Fasulo D."/>
            <person name="Halldorsson B.V."/>
            <person name="Hannenhalli S."/>
            <person name="Turner R."/>
            <person name="Yooseph S."/>
            <person name="Lu F."/>
            <person name="Nusskern D.R."/>
            <person name="Shue B.C."/>
            <person name="Zheng X.H."/>
            <person name="Zhong F."/>
            <person name="Delcher A.L."/>
            <person name="Huson D.H."/>
            <person name="Kravitz S.A."/>
            <person name="Mouchard L."/>
            <person name="Reinert K."/>
            <person name="Remington K.A."/>
            <person name="Clark A.G."/>
            <person name="Waterman M.S."/>
            <person name="Eichler E.E."/>
            <person name="Adams M.D."/>
            <person name="Hunkapiller M.W."/>
            <person name="Myers E.W."/>
            <person name="Venter J.C."/>
        </authorList>
    </citation>
    <scope>NUCLEOTIDE SEQUENCE [LARGE SCALE GENOMIC DNA]</scope>
</reference>
<reference key="5">
    <citation type="journal article" date="2004" name="Genome Res.">
        <title>The status, quality, and expansion of the NIH full-length cDNA project: the Mammalian Gene Collection (MGC).</title>
        <authorList>
            <consortium name="The MGC Project Team"/>
        </authorList>
    </citation>
    <scope>NUCLEOTIDE SEQUENCE [LARGE SCALE MRNA] (ISOFORM 2)</scope>
    <source>
        <tissue>Neuroblastoma</tissue>
        <tissue>Rhabdomyosarcoma</tissue>
    </source>
</reference>
<reference key="6">
    <citation type="submission" date="1997-11" db="EMBL/GenBank/DDBJ databases">
        <authorList>
            <person name="Yu W."/>
            <person name="Sarginson J."/>
            <person name="Gibbs R.A."/>
        </authorList>
    </citation>
    <scope>NUCLEOTIDE SEQUENCE [LARGE SCALE MRNA] OF 333-409</scope>
    <source>
        <tissue>Brain</tissue>
    </source>
</reference>
<reference key="7">
    <citation type="journal article" date="2019" name="Genet. Med.">
        <title>The Liberfarb syndrome, a multisystem disorder affecting eye, ear, bone, and brain development, is caused by a founder pathogenic variant in thePISD gene.</title>
        <authorList>
            <person name="Peter V.G."/>
            <person name="Quinodoz M."/>
            <person name="Pinto-Basto J."/>
            <person name="Sousa S.B."/>
            <person name="Di Gioia S.A."/>
            <person name="Soares G."/>
            <person name="Ferraz Leal G."/>
            <person name="Silva E.D."/>
            <person name="Pescini Gobert R."/>
            <person name="Miyake N."/>
            <person name="Matsumoto N."/>
            <person name="Engle E.C."/>
            <person name="Unger S."/>
            <person name="Shapiro F."/>
            <person name="Superti-Furga A."/>
            <person name="Rivolta C."/>
            <person name="Campos-Xavier B."/>
        </authorList>
    </citation>
    <scope>INVOLVEMENT IN LIBF</scope>
</reference>
<reference key="8">
    <citation type="journal article" date="2019" name="Hum. Mutat.">
        <title>The homozygous variant c.797G&gt;A/p.(Cys266Tyr) in PISD is associated with a Spondyloepimetaphyseal dysplasia with large epiphyses and disturbed mitochondrial function.</title>
        <authorList>
            <person name="Girisha K.M."/>
            <person name="von Elsner L."/>
            <person name="Neethukrishna K."/>
            <person name="Muranjan M."/>
            <person name="Shukla A."/>
            <person name="Bhavani G.S."/>
            <person name="Nishimura G."/>
            <person name="Kutsche K."/>
            <person name="Mortier G."/>
        </authorList>
    </citation>
    <scope>INVOLVEMENT IN LIBF</scope>
    <scope>VARIANT LIBF TYR-300</scope>
    <scope>CHARACTERIZATION OF VARIANT LIBF TYR-300</scope>
    <scope>FUNCTION</scope>
</reference>
<reference key="9">
    <citation type="journal article" date="2019" name="Life. Sci Alliance">
        <title>PISD is a mitochondrial disease gene causing skeletal dysplasia, cataracts, and white matter changes.</title>
        <authorList>
            <consortium name="Care4Rare Canada Consortium"/>
            <person name="Zhao T."/>
            <person name="Goedhart C.M."/>
            <person name="Sam P.N."/>
            <person name="Sabouny R."/>
            <person name="Lingrell S."/>
            <person name="Cornish A.J."/>
            <person name="Lamont R.E."/>
            <person name="Bernier F.P."/>
            <person name="Sinasac D."/>
            <person name="Parboosingh J.S."/>
            <person name="Vance J.E."/>
            <person name="Claypool S.M."/>
            <person name="Innes A.M."/>
            <person name="Shutt T.E."/>
        </authorList>
    </citation>
    <scope>VARIANT LIBF GLN-277</scope>
    <scope>CHARACTERIZATION OF VARIANTS LIBF GLN-277 AND TYR-300</scope>
    <scope>FUNCTION</scope>
    <scope>CATALYTIC ACTIVITY</scope>
    <scope>PATHWAY</scope>
    <scope>SUBCELLULAR LOCATION</scope>
    <scope>PROTEOLYTIC CLEAVAGE</scope>
    <scope>MUTAGENESIS OF SER-378</scope>
</reference>
<reference key="10">
    <citation type="journal article" date="2021" name="Biol. Open">
        <title>Conditional targeting of phosphatidylserine decarboxylase to lipid droplets.</title>
        <authorList>
            <person name="Kumar S."/>
            <person name="Chitraju C."/>
            <person name="Farese R.V. Jr."/>
            <person name="Walther T.C."/>
            <person name="Burd C.G."/>
        </authorList>
    </citation>
    <scope>SUBCELLULAR LOCATION (ISOFORMS 1 AND 2)</scope>
</reference>
<reference key="11">
    <citation type="journal article" date="2021" name="IScience">
        <title>Impaired phosphatidylethanolamine metabolism activates a reversible stress response that detects and resolves mutant mitochondrial precursors.</title>
        <authorList>
            <person name="Sam P.N."/>
            <person name="Calzada E."/>
            <person name="Acoba M.G."/>
            <person name="Zhao T."/>
            <person name="Watanabe Y."/>
            <person name="Nejatfard A."/>
            <person name="Trinidad J.C."/>
            <person name="Shutt T.E."/>
            <person name="Neal S.E."/>
            <person name="Claypool S.M."/>
        </authorList>
    </citation>
    <scope>SUBCELLULAR LOCATION</scope>
</reference>
<proteinExistence type="evidence at protein level"/>
<organism>
    <name type="scientific">Homo sapiens</name>
    <name type="common">Human</name>
    <dbReference type="NCBI Taxonomy" id="9606"/>
    <lineage>
        <taxon>Eukaryota</taxon>
        <taxon>Metazoa</taxon>
        <taxon>Chordata</taxon>
        <taxon>Craniata</taxon>
        <taxon>Vertebrata</taxon>
        <taxon>Euteleostomi</taxon>
        <taxon>Mammalia</taxon>
        <taxon>Eutheria</taxon>
        <taxon>Euarchontoglires</taxon>
        <taxon>Primates</taxon>
        <taxon>Haplorrhini</taxon>
        <taxon>Catarrhini</taxon>
        <taxon>Hominidae</taxon>
        <taxon>Homo</taxon>
    </lineage>
</organism>
<keyword id="KW-0025">Alternative splicing</keyword>
<keyword id="KW-0898">Cataract</keyword>
<keyword id="KW-0963">Cytoplasm</keyword>
<keyword id="KW-0209">Deafness</keyword>
<keyword id="KW-0210">Decarboxylase</keyword>
<keyword id="KW-0225">Disease variant</keyword>
<keyword id="KW-0242">Dwarfism</keyword>
<keyword id="KW-0991">Intellectual disability</keyword>
<keyword id="KW-0444">Lipid biosynthesis</keyword>
<keyword id="KW-0551">Lipid droplet</keyword>
<keyword id="KW-0443">Lipid metabolism</keyword>
<keyword id="KW-0456">Lyase</keyword>
<keyword id="KW-0472">Membrane</keyword>
<keyword id="KW-0496">Mitochondrion</keyword>
<keyword id="KW-0999">Mitochondrion inner membrane</keyword>
<keyword id="KW-0594">Phospholipid biosynthesis</keyword>
<keyword id="KW-1208">Phospholipid metabolism</keyword>
<keyword id="KW-1267">Proteomics identification</keyword>
<keyword id="KW-0670">Pyruvate</keyword>
<keyword id="KW-1185">Reference proteome</keyword>
<keyword id="KW-0809">Transit peptide</keyword>
<keyword id="KW-0812">Transmembrane</keyword>
<keyword id="KW-1133">Transmembrane helix</keyword>
<protein>
    <recommendedName>
        <fullName evidence="3">Phosphatidylserine decarboxylase proenzyme, mitochondrial</fullName>
        <ecNumber evidence="3 5">4.1.1.65</ecNumber>
    </recommendedName>
    <component>
        <recommendedName>
            <fullName evidence="3">Phosphatidylserine decarboxylase beta chain</fullName>
        </recommendedName>
    </component>
    <component>
        <recommendedName>
            <fullName evidence="3">Phosphatidylserine decarboxylase alpha chain</fullName>
        </recommendedName>
    </component>
</protein>
<comment type="function">
    <text evidence="1 3 4 5">Catalyzes the formation of phosphatidylethanolamine (PtdEtn) from phosphatidylserine (PtdSer) (PubMed:30488656, PubMed:30858161). Plays a central role in phospholipid metabolism and in the interorganelle trafficking of phosphatidylserine. May be involved in lipid droplet biogenesis at the endoplasmic reticulum membrane (By similarity).</text>
</comment>
<comment type="catalytic activity">
    <reaction evidence="3 5">
        <text>a 1,2-diacyl-sn-glycero-3-phospho-L-serine + H(+) = a 1,2-diacyl-sn-glycero-3-phosphoethanolamine + CO2</text>
        <dbReference type="Rhea" id="RHEA:20828"/>
        <dbReference type="ChEBI" id="CHEBI:15378"/>
        <dbReference type="ChEBI" id="CHEBI:16526"/>
        <dbReference type="ChEBI" id="CHEBI:57262"/>
        <dbReference type="ChEBI" id="CHEBI:64612"/>
        <dbReference type="EC" id="4.1.1.65"/>
    </reaction>
    <physiologicalReaction direction="left-to-right" evidence="5">
        <dbReference type="Rhea" id="RHEA:20829"/>
    </physiologicalReaction>
</comment>
<comment type="cofactor">
    <cofactor evidence="3">
        <name>pyruvate</name>
        <dbReference type="ChEBI" id="CHEBI:15361"/>
    </cofactor>
    <text evidence="3">Binds 1 pyruvoyl group covalently per subunit.</text>
</comment>
<comment type="pathway">
    <text evidence="5">Phospholipid metabolism; phosphatidylethanolamine biosynthesis.</text>
</comment>
<comment type="subunit">
    <text evidence="3">Heterodimer of a large membrane-associated beta subunit and a small pyruvoyl-containing alpha subunit.</text>
</comment>
<comment type="interaction">
    <interactant intactId="EBI-17870882">
        <id>Q9UG56-2</id>
    </interactant>
    <interactant intactId="EBI-7062247">
        <id>Q9UHD4</id>
        <label>CIDEB</label>
    </interactant>
    <organismsDiffer>false</organismsDiffer>
    <experiments>3</experiments>
</comment>
<comment type="subcellular location">
    <molecule>Phosphatidylserine decarboxylase beta chain</molecule>
    <subcellularLocation>
        <location evidence="3 11 12">Mitochondrion inner membrane</location>
        <topology evidence="3">Single-pass membrane protein</topology>
        <orientation evidence="3">Intermembrane side</orientation>
    </subcellularLocation>
</comment>
<comment type="subcellular location">
    <molecule>Phosphatidylserine decarboxylase alpha chain</molecule>
    <subcellularLocation>
        <location evidence="3 11 12">Mitochondrion inner membrane</location>
        <topology evidence="3">Peripheral membrane protein</topology>
        <orientation evidence="3">Intermembrane side</orientation>
    </subcellularLocation>
    <subcellularLocation>
        <location evidence="7">Cytoplasm</location>
    </subcellularLocation>
    <text evidence="3">Anchored to the mitochondrial inner membrane through its interaction with the integral membrane beta chain.</text>
</comment>
<comment type="subcellular location">
    <molecule>Isoform 1</molecule>
    <subcellularLocation>
        <location evidence="7">Mitochondrion inner membrane</location>
    </subcellularLocation>
</comment>
<comment type="subcellular location">
    <molecule>Isoform 2</molecule>
    <subcellularLocation>
        <location evidence="7">Mitochondrion inner membrane</location>
    </subcellularLocation>
    <subcellularLocation>
        <location evidence="7">Lipid droplet</location>
    </subcellularLocation>
    <text evidence="7">Predominantly localizes to lipid droplets in lipid-replete conditions, and to mitochondria in lipid-deplete conditions.</text>
</comment>
<comment type="alternative products">
    <event type="alternative splicing"/>
    <isoform>
        <id>Q9UG56-3</id>
        <name>1</name>
        <name evidence="9">PISD-M</name>
        <sequence type="displayed"/>
    </isoform>
    <isoform>
        <id>Q9UG56-2</id>
        <name>2</name>
        <name evidence="9">PISD-LD</name>
        <sequence type="described" ref="VSP_007540"/>
    </isoform>
</comment>
<comment type="PTM">
    <text evidence="3 5">Is synthesized initially as an inactive proenzyme. Formation of the active enzyme involves a self-maturation process in which the active site pyruvoyl group is generated from an internal serine residue via an autocatalytic post-translational modification. Two non-identical subunits are generated from the proenzyme in this reaction, and the pyruvate is formed at the N-terminus of the alpha chain, which is derived from the carboxyl end of the proenzyme. The autoendoproteolytic cleavage occurs by a canonical serine protease mechanism, in which the side chain hydroxyl group of the serine supplies its oxygen atom to form the C-terminus of the beta chain, while the remainder of the serine residue undergoes an oxidative deamination to produce ammonia and the pyruvoyl prosthetic group on the alpha chain. During this reaction, the Ser that is part of the protease active site of the proenzyme becomes the pyruvoyl prosthetic group, which constitutes an essential element of the active site of the mature decarboxylase.</text>
</comment>
<comment type="disease" evidence="4 5 6">
    <disease id="DI-05845">
        <name>Liberfarb syndrome</name>
        <acronym>LIBF</acronym>
        <description>An autosomal recessive multisystem disorder affecting the eye, ear, bone, and brain development. Clinical features include early-onset retinal degeneration, congenital cataracts, sensorineural hearing loss, microcephaly, intellectual disability, white matter changes, mild facial dysmorphism, and skeletal dysplasia with platyspondyly, scoliosis and short stature.</description>
        <dbReference type="MIM" id="618889"/>
    </disease>
    <text>The disease is caused by variants affecting the gene represented in this entry.</text>
</comment>
<comment type="similarity">
    <text evidence="3">Belongs to the phosphatidylserine decarboxylase family. PSD-B subfamily. Eukaryotic type I sub-subfamily.</text>
</comment>
<comment type="sequence caution" evidence="10">
    <conflict type="erroneous translation">
        <sequence resource="EMBL-CDS" id="CAB43678"/>
    </conflict>
</comment>
<sequence>MATSVGHRCLGLLHGVAPWRSSLHPCEITALSQSLQPLRKLPFRAFRTDARKIHTAPARTMFLLRPLPILLVTGGGYAGYRQYEKYRERELEKLGLEIPPKLAGHWEVALYKSVPTRLLSRAWGRLNQVELPHWLRRPVYSLYIWTFGVNMKEAAVEDLHHYRNLSEFFRRKLKPQARPVCGLHSVISPSDGRILNFGQVKNCEVEQVKGVTYSLESFLGPRMCTEDLPFPPAASCDSFKNQLVTREGNELYHCVIYLAPGDYHCFHSPTDWTVSHRRHFPGSLMSVNPGMARWIKELFCHNERVVLTGDWKHGFFSLTAVGATNVGSIRIYFDRDLHTNSPRHSKGSYNDFSFVTHTNREGVPMRKGEHLGEFNLGSTIVLIFEAPKDFNFQLKTGQKIRFGEALGSL</sequence>
<name>PISD_HUMAN</name>
<accession>Q9UG56</accession>
<accession>B1AKM7</accession>
<accession>O43207</accession>
<accession>O95535</accession>
<accession>Q6IC28</accession>
<accession>Q96GQ2</accession>
<accession>Q9UGA9</accession>
<evidence type="ECO:0000250" key="1">
    <source>
        <dbReference type="UniProtKB" id="A0A8H4BVL9"/>
    </source>
</evidence>
<evidence type="ECO:0000255" key="2"/>
<evidence type="ECO:0000255" key="3">
    <source>
        <dbReference type="HAMAP-Rule" id="MF_03208"/>
    </source>
</evidence>
<evidence type="ECO:0000269" key="4">
    <source>
    </source>
</evidence>
<evidence type="ECO:0000269" key="5">
    <source>
    </source>
</evidence>
<evidence type="ECO:0000269" key="6">
    <source>
    </source>
</evidence>
<evidence type="ECO:0000269" key="7">
    <source>
    </source>
</evidence>
<evidence type="ECO:0000303" key="8">
    <source>
    </source>
</evidence>
<evidence type="ECO:0000303" key="9">
    <source>
    </source>
</evidence>
<evidence type="ECO:0000305" key="10"/>
<evidence type="ECO:0000305" key="11">
    <source>
    </source>
</evidence>
<evidence type="ECO:0000305" key="12">
    <source>
    </source>
</evidence>
<feature type="transit peptide" description="Mitochondrion" evidence="2">
    <location>
        <begin position="1"/>
        <end position="52"/>
    </location>
</feature>
<feature type="chain" id="PRO_0000435571" description="Phosphatidylserine decarboxylase proenzyme, mitochondrial">
    <location>
        <begin position="53"/>
        <end position="409"/>
    </location>
</feature>
<feature type="chain" id="PRO_0000029835" description="Phosphatidylserine decarboxylase beta chain" evidence="3">
    <location>
        <begin position="53"/>
        <end position="377"/>
    </location>
</feature>
<feature type="chain" id="PRO_0000029836" description="Phosphatidylserine decarboxylase alpha chain" evidence="3">
    <location>
        <begin position="378"/>
        <end position="409"/>
    </location>
</feature>
<feature type="topological domain" description="Mitochondrial matrix" evidence="3">
    <location>
        <begin position="53"/>
        <end position="63"/>
    </location>
</feature>
<feature type="transmembrane region" description="Helical" evidence="3">
    <location>
        <begin position="64"/>
        <end position="82"/>
    </location>
</feature>
<feature type="topological domain" description="Mitochondrial intermembrane" evidence="3">
    <location>
        <begin position="83"/>
        <end position="409"/>
    </location>
</feature>
<feature type="active site" description="Charge relay system; for autoendoproteolytic cleavage activity" evidence="3">
    <location>
        <position position="191"/>
    </location>
</feature>
<feature type="active site" description="Charge relay system; for autoendoproteolytic cleavage activity" evidence="3">
    <location>
        <position position="267"/>
    </location>
</feature>
<feature type="active site" description="Charge relay system; for autoendoproteolytic cleavage activity" evidence="3">
    <location>
        <position position="378"/>
    </location>
</feature>
<feature type="active site" description="Schiff-base intermediate with substrate; via pyruvic acid; for decarboxylase activity" evidence="3">
    <location>
        <position position="378"/>
    </location>
</feature>
<feature type="site" description="Cleavage (non-hydrolytic); by autocatalysis" evidence="3">
    <location>
        <begin position="377"/>
        <end position="378"/>
    </location>
</feature>
<feature type="modified residue" description="Pyruvic acid (Ser); by autocatalysis" evidence="3">
    <location>
        <position position="378"/>
    </location>
</feature>
<feature type="splice variant" id="VSP_007540" description="In isoform 2." evidence="8">
    <original>MATSVGHRCLGLLHGVAPWRSSLHPCEITALSQSLQPLRKLPFRAFRTDARKIHTAPARTMFLLRPLPILLVTGGGYAGYRQYEKYRERELEKLGLEIPPKLAGHWE</original>
    <variation>MMCQSEARQGPELRAAKWLHFPQLALRRRLGQLSCMSRPALKLRSWPLTVLYYLLPFGALRPLSRVGWRPVSR</variation>
    <location>
        <begin position="1"/>
        <end position="107"/>
    </location>
</feature>
<feature type="sequence variant" id="VAR_084458" description="In LIBF; loss of autocatalytic processing; decreased protein abundance; decreased phosphatidylserine decarboxylase activity; changed mitochondrion organization; dbSNP:rs147371584." evidence="5">
    <original>R</original>
    <variation>Q</variation>
    <location>
        <position position="277"/>
    </location>
</feature>
<feature type="sequence variant" id="VAR_084459" description="In LIBF; loss of autocatalytic processing; probably decreased phosphatidylserine decarboxylase activity; changed mitochondrion organization; patient-derived fibroblasts show fragmented mitochondrial morphology around the nucleus; decreased cell viability with increased CASP3 and CASP7 activation; dbSNP:rs2072505076." evidence="4 5">
    <original>C</original>
    <variation>Y</variation>
    <location>
        <position position="300"/>
    </location>
</feature>
<feature type="mutagenesis site" description="Loss of autocatalytic processing." evidence="5">
    <original>S</original>
    <variation>A</variation>
    <location>
        <position position="378"/>
    </location>
</feature>
<feature type="region of interest" description="Necessary for localization to both lipid droplets and mitochondria" evidence="7">
    <location sequence="Q9UG56-2">
        <begin position="36"/>
        <end position="103"/>
    </location>
</feature>
<dbReference type="EC" id="4.1.1.65" evidence="3 5"/>
<dbReference type="EMBL" id="CR456540">
    <property type="protein sequence ID" value="CAG30426.1"/>
    <property type="molecule type" value="mRNA"/>
</dbReference>
<dbReference type="EMBL" id="AL050371">
    <property type="protein sequence ID" value="CAB43678.2"/>
    <property type="status" value="ALT_SEQ"/>
    <property type="molecule type" value="Transcribed_RNA"/>
</dbReference>
<dbReference type="EMBL" id="AL096768">
    <property type="status" value="NOT_ANNOTATED_CDS"/>
    <property type="molecule type" value="Genomic_DNA"/>
</dbReference>
<dbReference type="EMBL" id="AL031255">
    <property type="status" value="NOT_ANNOTATED_CDS"/>
    <property type="molecule type" value="Genomic_DNA"/>
</dbReference>
<dbReference type="EMBL" id="CH471095">
    <property type="protein sequence ID" value="EAW59984.1"/>
    <property type="molecule type" value="Genomic_DNA"/>
</dbReference>
<dbReference type="EMBL" id="BC001482">
    <property type="protein sequence ID" value="AAH01482.1"/>
    <property type="molecule type" value="mRNA"/>
</dbReference>
<dbReference type="EMBL" id="BC009315">
    <property type="protein sequence ID" value="AAH09315.1"/>
    <property type="molecule type" value="mRNA"/>
</dbReference>
<dbReference type="EMBL" id="AF035304">
    <property type="protein sequence ID" value="AAB88186.1"/>
    <property type="molecule type" value="mRNA"/>
</dbReference>
<dbReference type="CCDS" id="CCDS13899.1">
    <molecule id="Q9UG56-2"/>
</dbReference>
<dbReference type="CCDS" id="CCDS87016.1">
    <molecule id="Q9UG56-3"/>
</dbReference>
<dbReference type="RefSeq" id="NP_001313340.1">
    <molecule id="Q9UG56-3"/>
    <property type="nucleotide sequence ID" value="NM_001326411.2"/>
</dbReference>
<dbReference type="RefSeq" id="NP_001313344.1">
    <molecule id="Q9UG56-2"/>
    <property type="nucleotide sequence ID" value="NM_001326415.2"/>
</dbReference>
<dbReference type="RefSeq" id="NP_001313345.1">
    <molecule id="Q9UG56-2"/>
    <property type="nucleotide sequence ID" value="NM_001326416.2"/>
</dbReference>
<dbReference type="RefSeq" id="NP_001313346.1">
    <molecule id="Q9UG56-2"/>
    <property type="nucleotide sequence ID" value="NM_001326417.2"/>
</dbReference>
<dbReference type="RefSeq" id="NP_055153.1">
    <molecule id="Q9UG56-2"/>
    <property type="nucleotide sequence ID" value="NM_014338.4"/>
</dbReference>
<dbReference type="RefSeq" id="NP_821141.1">
    <molecule id="Q9UG56-2"/>
    <property type="nucleotide sequence ID" value="NM_178022.2"/>
</dbReference>
<dbReference type="SMR" id="Q9UG56"/>
<dbReference type="BioGRID" id="117262">
    <property type="interactions" value="97"/>
</dbReference>
<dbReference type="FunCoup" id="Q9UG56">
    <property type="interactions" value="2897"/>
</dbReference>
<dbReference type="IntAct" id="Q9UG56">
    <property type="interactions" value="50"/>
</dbReference>
<dbReference type="MINT" id="Q9UG56"/>
<dbReference type="STRING" id="9606.ENSP00000391739"/>
<dbReference type="DrugBank" id="DB00144">
    <property type="generic name" value="Phosphatidyl serine"/>
</dbReference>
<dbReference type="iPTMnet" id="Q9UG56"/>
<dbReference type="PhosphoSitePlus" id="Q9UG56"/>
<dbReference type="BioMuta" id="PISD"/>
<dbReference type="DMDM" id="311033492"/>
<dbReference type="jPOST" id="Q9UG56"/>
<dbReference type="MassIVE" id="Q9UG56"/>
<dbReference type="PaxDb" id="9606-ENSP00000371586"/>
<dbReference type="PeptideAtlas" id="Q9UG56"/>
<dbReference type="ProteomicsDB" id="84200">
    <molecule id="Q9UG56-3"/>
</dbReference>
<dbReference type="ProteomicsDB" id="84201">
    <molecule id="Q9UG56-2"/>
</dbReference>
<dbReference type="Pumba" id="Q9UG56"/>
<dbReference type="Antibodypedia" id="34990">
    <property type="antibodies" value="282 antibodies from 27 providers"/>
</dbReference>
<dbReference type="DNASU" id="23761"/>
<dbReference type="Ensembl" id="ENST00000266095.9">
    <molecule id="Q9UG56-2"/>
    <property type="protein sequence ID" value="ENSP00000266095.5"/>
    <property type="gene ID" value="ENSG00000241878.12"/>
</dbReference>
<dbReference type="Ensembl" id="ENST00000382151.6">
    <molecule id="Q9UG56-2"/>
    <property type="protein sequence ID" value="ENSP00000371586.2"/>
    <property type="gene ID" value="ENSG00000241878.12"/>
</dbReference>
<dbReference type="Ensembl" id="ENST00000439502.7">
    <molecule id="Q9UG56-3"/>
    <property type="protein sequence ID" value="ENSP00000391739.2"/>
    <property type="gene ID" value="ENSG00000241878.12"/>
</dbReference>
<dbReference type="GeneID" id="23761"/>
<dbReference type="KEGG" id="hsa:23761"/>
<dbReference type="MANE-Select" id="ENST00000439502.7">
    <property type="protein sequence ID" value="ENSP00000391739.2"/>
    <property type="RefSeq nucleotide sequence ID" value="NM_001326411.2"/>
    <property type="RefSeq protein sequence ID" value="NP_001313340.1"/>
</dbReference>
<dbReference type="UCSC" id="uc003alk.3">
    <molecule id="Q9UG56-3"/>
    <property type="organism name" value="human"/>
</dbReference>
<dbReference type="AGR" id="HGNC:8999"/>
<dbReference type="CTD" id="23761"/>
<dbReference type="DisGeNET" id="23761"/>
<dbReference type="GeneCards" id="PISD"/>
<dbReference type="HGNC" id="HGNC:8999">
    <property type="gene designation" value="PISD"/>
</dbReference>
<dbReference type="HPA" id="ENSG00000241878">
    <property type="expression patterns" value="Low tissue specificity"/>
</dbReference>
<dbReference type="MalaCards" id="PISD"/>
<dbReference type="MIM" id="612770">
    <property type="type" value="gene"/>
</dbReference>
<dbReference type="MIM" id="618889">
    <property type="type" value="phenotype"/>
</dbReference>
<dbReference type="neXtProt" id="NX_Q9UG56"/>
<dbReference type="OpenTargets" id="ENSG00000241878"/>
<dbReference type="Orphanet" id="589442">
    <property type="disease" value="Short stature-skeletal dysplasia-retinal degeneration-intellectual disability-sensorineural hearing loss syndrome"/>
</dbReference>
<dbReference type="PharmGKB" id="PA33333"/>
<dbReference type="VEuPathDB" id="HostDB:ENSG00000241878"/>
<dbReference type="eggNOG" id="KOG2420">
    <property type="taxonomic scope" value="Eukaryota"/>
</dbReference>
<dbReference type="GeneTree" id="ENSGT00390000013484"/>
<dbReference type="HOGENOM" id="CLU_029061_3_0_1"/>
<dbReference type="InParanoid" id="Q9UG56"/>
<dbReference type="OMA" id="KDYHHYH"/>
<dbReference type="OrthoDB" id="4330at2759"/>
<dbReference type="PAN-GO" id="Q9UG56">
    <property type="GO annotations" value="3 GO annotations based on evolutionary models"/>
</dbReference>
<dbReference type="PhylomeDB" id="Q9UG56"/>
<dbReference type="TreeFam" id="TF313148"/>
<dbReference type="BioCyc" id="MetaCyc:HS01985-MONOMER"/>
<dbReference type="PathwayCommons" id="Q9UG56"/>
<dbReference type="Reactome" id="R-HSA-1483213">
    <property type="pathway name" value="Synthesis of PE"/>
</dbReference>
<dbReference type="SignaLink" id="Q9UG56"/>
<dbReference type="UniPathway" id="UPA00558"/>
<dbReference type="BioGRID-ORCS" id="23761">
    <property type="hits" value="532 hits in 1169 CRISPR screens"/>
</dbReference>
<dbReference type="ChiTaRS" id="PISD">
    <property type="organism name" value="human"/>
</dbReference>
<dbReference type="GeneWiki" id="PISD_(gene)"/>
<dbReference type="GenomeRNAi" id="23761"/>
<dbReference type="Pharos" id="Q9UG56">
    <property type="development level" value="Tbio"/>
</dbReference>
<dbReference type="PRO" id="PR:Q9UG56"/>
<dbReference type="Proteomes" id="UP000005640">
    <property type="component" value="Chromosome 22"/>
</dbReference>
<dbReference type="RNAct" id="Q9UG56">
    <property type="molecule type" value="protein"/>
</dbReference>
<dbReference type="Bgee" id="ENSG00000241878">
    <property type="expression patterns" value="Expressed in cerebellar hemisphere and 190 other cell types or tissues"/>
</dbReference>
<dbReference type="ExpressionAtlas" id="Q9UG56">
    <property type="expression patterns" value="baseline and differential"/>
</dbReference>
<dbReference type="GO" id="GO:0005829">
    <property type="term" value="C:cytosol"/>
    <property type="evidence" value="ECO:0000314"/>
    <property type="project" value="HPA"/>
</dbReference>
<dbReference type="GO" id="GO:0005794">
    <property type="term" value="C:Golgi apparatus"/>
    <property type="evidence" value="ECO:0000314"/>
    <property type="project" value="HPA"/>
</dbReference>
<dbReference type="GO" id="GO:0005811">
    <property type="term" value="C:lipid droplet"/>
    <property type="evidence" value="ECO:0000314"/>
    <property type="project" value="UniProtKB"/>
</dbReference>
<dbReference type="GO" id="GO:0005743">
    <property type="term" value="C:mitochondrial inner membrane"/>
    <property type="evidence" value="ECO:0007669"/>
    <property type="project" value="UniProtKB-SubCell"/>
</dbReference>
<dbReference type="GO" id="GO:0005739">
    <property type="term" value="C:mitochondrion"/>
    <property type="evidence" value="ECO:0000314"/>
    <property type="project" value="UniProtKB"/>
</dbReference>
<dbReference type="GO" id="GO:0005634">
    <property type="term" value="C:nucleus"/>
    <property type="evidence" value="ECO:0000314"/>
    <property type="project" value="LIFEdb"/>
</dbReference>
<dbReference type="GO" id="GO:0004609">
    <property type="term" value="F:phosphatidylserine decarboxylase activity"/>
    <property type="evidence" value="ECO:0000315"/>
    <property type="project" value="UniProtKB"/>
</dbReference>
<dbReference type="GO" id="GO:0140042">
    <property type="term" value="P:lipid droplet formation"/>
    <property type="evidence" value="ECO:0000315"/>
    <property type="project" value="UniProtKB"/>
</dbReference>
<dbReference type="GO" id="GO:0035694">
    <property type="term" value="P:mitochondrial protein catabolic process"/>
    <property type="evidence" value="ECO:0000315"/>
    <property type="project" value="UniProtKB"/>
</dbReference>
<dbReference type="GO" id="GO:0006646">
    <property type="term" value="P:phosphatidylethanolamine biosynthetic process"/>
    <property type="evidence" value="ECO:0000315"/>
    <property type="project" value="UniProtKB"/>
</dbReference>
<dbReference type="GO" id="GO:0016540">
    <property type="term" value="P:protein autoprocessing"/>
    <property type="evidence" value="ECO:0007669"/>
    <property type="project" value="UniProtKB-UniRule"/>
</dbReference>
<dbReference type="GO" id="GO:0010821">
    <property type="term" value="P:regulation of mitochondrion organization"/>
    <property type="evidence" value="ECO:0000315"/>
    <property type="project" value="UniProtKB"/>
</dbReference>
<dbReference type="HAMAP" id="MF_03208">
    <property type="entry name" value="PS_decarb_PSD_B_type1_euk"/>
    <property type="match status" value="1"/>
</dbReference>
<dbReference type="InterPro" id="IPR003817">
    <property type="entry name" value="PS_Dcarbxylase"/>
</dbReference>
<dbReference type="InterPro" id="IPR033177">
    <property type="entry name" value="PSD-B"/>
</dbReference>
<dbReference type="InterPro" id="IPR033661">
    <property type="entry name" value="PSD_type1_euk"/>
</dbReference>
<dbReference type="NCBIfam" id="TIGR00163">
    <property type="entry name" value="PS_decarb"/>
    <property type="match status" value="1"/>
</dbReference>
<dbReference type="PANTHER" id="PTHR10067">
    <property type="entry name" value="PHOSPHATIDYLSERINE DECARBOXYLASE"/>
    <property type="match status" value="1"/>
</dbReference>
<dbReference type="PANTHER" id="PTHR10067:SF6">
    <property type="entry name" value="PHOSPHATIDYLSERINE DECARBOXYLASE PROENZYME, MITOCHONDRIAL"/>
    <property type="match status" value="1"/>
</dbReference>
<dbReference type="Pfam" id="PF02666">
    <property type="entry name" value="PS_Dcarbxylase"/>
    <property type="match status" value="1"/>
</dbReference>
<gene>
    <name evidence="3" type="primary">PISD</name>
</gene>